<proteinExistence type="evidence at protein level"/>
<accession>Q9GZT4</accession>
<accession>D3DTI5</accession>
<accession>Q6IA55</accession>
<organism>
    <name type="scientific">Homo sapiens</name>
    <name type="common">Human</name>
    <dbReference type="NCBI Taxonomy" id="9606"/>
    <lineage>
        <taxon>Eukaryota</taxon>
        <taxon>Metazoa</taxon>
        <taxon>Chordata</taxon>
        <taxon>Craniata</taxon>
        <taxon>Vertebrata</taxon>
        <taxon>Euteleostomi</taxon>
        <taxon>Mammalia</taxon>
        <taxon>Eutheria</taxon>
        <taxon>Euarchontoglires</taxon>
        <taxon>Primates</taxon>
        <taxon>Haplorrhini</taxon>
        <taxon>Catarrhini</taxon>
        <taxon>Hominidae</taxon>
        <taxon>Homo</taxon>
    </lineage>
</organism>
<protein>
    <recommendedName>
        <fullName evidence="12">Serine racemase</fullName>
        <ecNumber evidence="6 7 9">5.1.1.18</ecNumber>
    </recommendedName>
    <alternativeName>
        <fullName>D-serine ammonia-lyase</fullName>
    </alternativeName>
    <alternativeName>
        <fullName>D-serine dehydratase</fullName>
        <ecNumber evidence="3">4.3.1.18</ecNumber>
    </alternativeName>
    <alternativeName>
        <fullName>L-serine ammonia-lyase</fullName>
    </alternativeName>
    <alternativeName>
        <fullName>L-serine dehydratase</fullName>
        <ecNumber evidence="3">4.3.1.17</ecNumber>
    </alternativeName>
</protein>
<feature type="chain" id="PRO_0000185650" description="Serine racemase">
    <location>
        <begin position="1"/>
        <end position="340"/>
    </location>
</feature>
<feature type="active site" description="Proton acceptor" evidence="1">
    <location>
        <position position="56"/>
    </location>
</feature>
<feature type="active site" description="Proton acceptor" evidence="1">
    <location>
        <position position="84"/>
    </location>
</feature>
<feature type="binding site" evidence="11 24">
    <location>
        <position position="13"/>
    </location>
    <ligand>
        <name>Mg(2+)</name>
        <dbReference type="ChEBI" id="CHEBI:18420"/>
        <label>1</label>
    </ligand>
</feature>
<feature type="binding site" evidence="11 18">
    <location>
        <position position="31"/>
    </location>
    <ligand>
        <name>ATP</name>
        <dbReference type="ChEBI" id="CHEBI:30616"/>
    </ligand>
</feature>
<feature type="binding site" evidence="11 18">
    <location>
        <position position="32"/>
    </location>
    <ligand>
        <name>ATP</name>
        <dbReference type="ChEBI" id="CHEBI:30616"/>
    </ligand>
</feature>
<feature type="binding site" evidence="11 18">
    <location>
        <position position="33"/>
    </location>
    <ligand>
        <name>ATP</name>
        <dbReference type="ChEBI" id="CHEBI:30616"/>
    </ligand>
</feature>
<feature type="binding site" evidence="11 18">
    <location>
        <position position="51"/>
    </location>
    <ligand>
        <name>ATP</name>
        <dbReference type="ChEBI" id="CHEBI:30616"/>
    </ligand>
</feature>
<feature type="binding site" evidence="11 18">
    <location>
        <position position="52"/>
    </location>
    <ligand>
        <name>ATP</name>
        <dbReference type="ChEBI" id="CHEBI:30616"/>
    </ligand>
</feature>
<feature type="binding site" evidence="11 20 22">
    <location>
        <position position="69"/>
    </location>
    <ligand>
        <name>Ca(2+)</name>
        <dbReference type="ChEBI" id="CHEBI:29108"/>
        <label>1</label>
    </ligand>
</feature>
<feature type="binding site" evidence="11 21">
    <location>
        <position position="81"/>
    </location>
    <ligand>
        <name>Ca(2+)</name>
        <dbReference type="ChEBI" id="CHEBI:29108"/>
        <label>2</label>
    </ligand>
</feature>
<feature type="binding site" evidence="6 9 11 14 16 20 21 22 23">
    <location>
        <position position="86"/>
    </location>
    <ligand>
        <name>pyridoxal 5'-phosphate</name>
        <dbReference type="ChEBI" id="CHEBI:597326"/>
    </ligand>
</feature>
<feature type="binding site" evidence="11 18">
    <location>
        <position position="89"/>
    </location>
    <ligand>
        <name>ATP</name>
        <dbReference type="ChEBI" id="CHEBI:30616"/>
    </ligand>
</feature>
<feature type="binding site" evidence="11 18">
    <location>
        <position position="121"/>
    </location>
    <ligand>
        <name>ATP</name>
        <dbReference type="ChEBI" id="CHEBI:30616"/>
    </ligand>
</feature>
<feature type="binding site" evidence="2">
    <location>
        <position position="154"/>
    </location>
    <ligand>
        <name>pyridoxal 5'-phosphate</name>
        <dbReference type="ChEBI" id="CHEBI:597326"/>
    </ligand>
</feature>
<feature type="binding site" evidence="10 11 17 19 21">
    <location>
        <position position="178"/>
    </location>
    <ligand>
        <name>Mg(2+)</name>
        <dbReference type="ChEBI" id="CHEBI:18420"/>
        <label>2</label>
    </ligand>
</feature>
<feature type="binding site" evidence="6 9 11 14 16 20 21 22 23">
    <location>
        <position position="185"/>
    </location>
    <ligand>
        <name>pyridoxal 5'-phosphate</name>
        <dbReference type="ChEBI" id="CHEBI:597326"/>
    </ligand>
</feature>
<feature type="binding site" evidence="6 9 11 14 16 20 21 22 23">
    <location>
        <position position="186"/>
    </location>
    <ligand>
        <name>pyridoxal 5'-phosphate</name>
        <dbReference type="ChEBI" id="CHEBI:597326"/>
    </ligand>
</feature>
<feature type="binding site" evidence="6 9 11 14 16 20 21 22 23">
    <location>
        <position position="187"/>
    </location>
    <ligand>
        <name>pyridoxal 5'-phosphate</name>
        <dbReference type="ChEBI" id="CHEBI:597326"/>
    </ligand>
</feature>
<feature type="binding site" evidence="6 9 11 14 16 20 21 22 23">
    <location>
        <position position="188"/>
    </location>
    <ligand>
        <name>pyridoxal 5'-phosphate</name>
        <dbReference type="ChEBI" id="CHEBI:597326"/>
    </ligand>
</feature>
<feature type="binding site" evidence="6 9 11 14 16 20 21 22 23">
    <location>
        <position position="189"/>
    </location>
    <ligand>
        <name>pyridoxal 5'-phosphate</name>
        <dbReference type="ChEBI" id="CHEBI:597326"/>
    </ligand>
</feature>
<feature type="binding site" evidence="11 19 20 21 22 23 24">
    <location>
        <position position="210"/>
    </location>
    <ligand>
        <name>Ca(2+)</name>
        <dbReference type="ChEBI" id="CHEBI:29108"/>
        <label>3</label>
    </ligand>
</feature>
<feature type="binding site" evidence="9 10 11 16 17 18">
    <location>
        <position position="210"/>
    </location>
    <ligand>
        <name>Mg(2+)</name>
        <dbReference type="ChEBI" id="CHEBI:18420"/>
        <label>3</label>
    </ligand>
</feature>
<feature type="binding site" evidence="6 11 14 15">
    <location>
        <position position="210"/>
    </location>
    <ligand>
        <name>Mn(2+)</name>
        <dbReference type="ChEBI" id="CHEBI:29035"/>
    </ligand>
</feature>
<feature type="binding site" evidence="11 19 20 21 22 23 24">
    <location>
        <position position="214"/>
    </location>
    <ligand>
        <name>Ca(2+)</name>
        <dbReference type="ChEBI" id="CHEBI:29108"/>
        <label>3</label>
    </ligand>
</feature>
<feature type="binding site" evidence="9 10 11 16 17 18">
    <location>
        <position position="214"/>
    </location>
    <ligand>
        <name>Mg(2+)</name>
        <dbReference type="ChEBI" id="CHEBI:18420"/>
        <label>3</label>
    </ligand>
</feature>
<feature type="binding site" evidence="6 14 15">
    <location>
        <position position="214"/>
    </location>
    <ligand>
        <name>Mn(2+)</name>
        <dbReference type="ChEBI" id="CHEBI:29035"/>
    </ligand>
</feature>
<feature type="binding site" evidence="11 19 20 21 22 23 24">
    <location>
        <position position="216"/>
    </location>
    <ligand>
        <name>Ca(2+)</name>
        <dbReference type="ChEBI" id="CHEBI:29108"/>
        <label>3</label>
    </ligand>
</feature>
<feature type="binding site" evidence="9 10 11 16 17 18">
    <location>
        <position position="216"/>
    </location>
    <ligand>
        <name>Mg(2+)</name>
        <dbReference type="ChEBI" id="CHEBI:18420"/>
        <label>3</label>
    </ligand>
</feature>
<feature type="binding site" evidence="6 14 15">
    <location>
        <position position="216"/>
    </location>
    <ligand>
        <name>Mn(2+)</name>
        <dbReference type="ChEBI" id="CHEBI:29035"/>
    </ligand>
</feature>
<feature type="binding site" evidence="11 21">
    <location>
        <position position="247"/>
    </location>
    <ligand>
        <name>Ca(2+)</name>
        <dbReference type="ChEBI" id="CHEBI:29108"/>
        <label>4</label>
    </ligand>
</feature>
<feature type="binding site" evidence="11 20 21 22 23 24">
    <location>
        <position position="247"/>
    </location>
    <ligand>
        <name>Mg(2+)</name>
        <dbReference type="ChEBI" id="CHEBI:18420"/>
        <label>4</label>
    </ligand>
</feature>
<feature type="binding site" evidence="11 18">
    <location>
        <position position="279"/>
    </location>
    <ligand>
        <name>ATP</name>
        <dbReference type="ChEBI" id="CHEBI:30616"/>
    </ligand>
</feature>
<feature type="binding site" evidence="6 9 11 14 16 20 21 22 23">
    <location>
        <position position="313"/>
    </location>
    <ligand>
        <name>pyridoxal 5'-phosphate</name>
        <dbReference type="ChEBI" id="CHEBI:597326"/>
    </ligand>
</feature>
<feature type="binding site" evidence="11 18">
    <location>
        <position position="316"/>
    </location>
    <ligand>
        <name>ATP</name>
        <dbReference type="ChEBI" id="CHEBI:30616"/>
    </ligand>
</feature>
<feature type="modified residue" description="N6-(pyridoxal phosphate)lysine" evidence="6 9 11 14 16 20 21 22 23">
    <location>
        <position position="56"/>
    </location>
</feature>
<feature type="modified residue" description="S-nitrosocysteine" evidence="3">
    <location>
        <position position="113"/>
    </location>
</feature>
<feature type="helix" evidence="25">
    <location>
        <begin position="9"/>
        <end position="19"/>
    </location>
</feature>
<feature type="helix" evidence="25">
    <location>
        <begin position="20"/>
        <end position="22"/>
    </location>
</feature>
<feature type="helix" evidence="25">
    <location>
        <begin position="32"/>
        <end position="38"/>
    </location>
</feature>
<feature type="strand" evidence="25">
    <location>
        <begin position="40"/>
        <end position="46"/>
    </location>
</feature>
<feature type="helix" evidence="25">
    <location>
        <begin position="47"/>
        <end position="49"/>
    </location>
</feature>
<feature type="helix" evidence="25">
    <location>
        <begin position="51"/>
        <end position="53"/>
    </location>
</feature>
<feature type="helix" evidence="25">
    <location>
        <begin position="56"/>
        <end position="65"/>
    </location>
</feature>
<feature type="strand" evidence="25">
    <location>
        <begin position="79"/>
        <end position="82"/>
    </location>
</feature>
<feature type="helix" evidence="25">
    <location>
        <begin position="86"/>
        <end position="97"/>
    </location>
</feature>
<feature type="strand" evidence="25">
    <location>
        <begin position="102"/>
        <end position="107"/>
    </location>
</feature>
<feature type="helix" evidence="25">
    <location>
        <begin position="112"/>
        <end position="120"/>
    </location>
</feature>
<feature type="strand" evidence="25">
    <location>
        <begin position="124"/>
        <end position="128"/>
    </location>
</feature>
<feature type="helix" evidence="25">
    <location>
        <begin position="132"/>
        <end position="146"/>
    </location>
</feature>
<feature type="strand" evidence="25">
    <location>
        <begin position="153"/>
        <end position="155"/>
    </location>
</feature>
<feature type="helix" evidence="25">
    <location>
        <begin position="157"/>
        <end position="173"/>
    </location>
</feature>
<feature type="strand" evidence="25">
    <location>
        <begin position="179"/>
        <end position="183"/>
    </location>
</feature>
<feature type="strand" evidence="25">
    <location>
        <begin position="185"/>
        <end position="187"/>
    </location>
</feature>
<feature type="helix" evidence="25">
    <location>
        <begin position="188"/>
        <end position="200"/>
    </location>
</feature>
<feature type="strand" evidence="25">
    <location>
        <begin position="204"/>
        <end position="211"/>
    </location>
</feature>
<feature type="helix" evidence="25">
    <location>
        <begin position="212"/>
        <end position="214"/>
    </location>
</feature>
<feature type="helix" evidence="25">
    <location>
        <begin position="216"/>
        <end position="223"/>
    </location>
</feature>
<feature type="helix" evidence="25">
    <location>
        <begin position="238"/>
        <end position="240"/>
    </location>
</feature>
<feature type="helix" evidence="25">
    <location>
        <begin position="248"/>
        <end position="255"/>
    </location>
</feature>
<feature type="strand" evidence="25">
    <location>
        <begin position="258"/>
        <end position="262"/>
    </location>
</feature>
<feature type="helix" evidence="25">
    <location>
        <begin position="264"/>
        <end position="278"/>
    </location>
</feature>
<feature type="helix" evidence="25">
    <location>
        <begin position="284"/>
        <end position="294"/>
    </location>
</feature>
<feature type="helix" evidence="25">
    <location>
        <begin position="296"/>
        <end position="300"/>
    </location>
</feature>
<feature type="strand" evidence="25">
    <location>
        <begin position="307"/>
        <end position="312"/>
    </location>
</feature>
<feature type="helix" evidence="25">
    <location>
        <begin position="321"/>
        <end position="323"/>
    </location>
</feature>
<dbReference type="EC" id="5.1.1.18" evidence="6 7 9"/>
<dbReference type="EC" id="4.3.1.18" evidence="3"/>
<dbReference type="EC" id="4.3.1.17" evidence="3"/>
<dbReference type="EMBL" id="AF169974">
    <property type="protein sequence ID" value="AAG27081.1"/>
    <property type="molecule type" value="mRNA"/>
</dbReference>
<dbReference type="EMBL" id="AY034081">
    <property type="protein sequence ID" value="AAK58495.1"/>
    <property type="molecule type" value="mRNA"/>
</dbReference>
<dbReference type="EMBL" id="AK023169">
    <property type="protein sequence ID" value="BAB14442.1"/>
    <property type="molecule type" value="mRNA"/>
</dbReference>
<dbReference type="EMBL" id="CR457300">
    <property type="protein sequence ID" value="CAG33581.1"/>
    <property type="molecule type" value="mRNA"/>
</dbReference>
<dbReference type="EMBL" id="CH471108">
    <property type="protein sequence ID" value="EAW90553.1"/>
    <property type="molecule type" value="Genomic_DNA"/>
</dbReference>
<dbReference type="EMBL" id="CH471108">
    <property type="protein sequence ID" value="EAW90554.1"/>
    <property type="molecule type" value="Genomic_DNA"/>
</dbReference>
<dbReference type="EMBL" id="CH471108">
    <property type="protein sequence ID" value="EAW90555.1"/>
    <property type="molecule type" value="Genomic_DNA"/>
</dbReference>
<dbReference type="EMBL" id="BC074728">
    <property type="protein sequence ID" value="AAH74728.1"/>
    <property type="molecule type" value="mRNA"/>
</dbReference>
<dbReference type="CCDS" id="CCDS11017.1"/>
<dbReference type="RefSeq" id="NP_068766.1">
    <property type="nucleotide sequence ID" value="NM_021947.3"/>
</dbReference>
<dbReference type="RefSeq" id="XP_006721628.1">
    <property type="nucleotide sequence ID" value="XM_006721565.4"/>
</dbReference>
<dbReference type="RefSeq" id="XP_006721629.1">
    <property type="nucleotide sequence ID" value="XM_006721566.4"/>
</dbReference>
<dbReference type="RefSeq" id="XP_011522276.1">
    <property type="nucleotide sequence ID" value="XM_011523974.4"/>
</dbReference>
<dbReference type="RefSeq" id="XP_054172848.1">
    <property type="nucleotide sequence ID" value="XM_054316873.1"/>
</dbReference>
<dbReference type="RefSeq" id="XP_054172849.1">
    <property type="nucleotide sequence ID" value="XM_054316874.1"/>
</dbReference>
<dbReference type="RefSeq" id="XP_054172850.1">
    <property type="nucleotide sequence ID" value="XM_054316875.1"/>
</dbReference>
<dbReference type="PDB" id="3L6B">
    <property type="method" value="X-ray"/>
    <property type="resolution" value="1.50 A"/>
    <property type="chains" value="A=1-340"/>
</dbReference>
<dbReference type="PDB" id="3L6R">
    <property type="method" value="X-ray"/>
    <property type="resolution" value="1.70 A"/>
    <property type="chains" value="A=1-340"/>
</dbReference>
<dbReference type="PDB" id="5X2L">
    <property type="method" value="X-ray"/>
    <property type="resolution" value="1.81 A"/>
    <property type="chains" value="A/B=1-340"/>
</dbReference>
<dbReference type="PDB" id="6SLH">
    <property type="method" value="X-ray"/>
    <property type="resolution" value="1.89 A"/>
    <property type="chains" value="AAA/BBB/CCC/DDD=1-340"/>
</dbReference>
<dbReference type="PDB" id="6ZSP">
    <property type="method" value="X-ray"/>
    <property type="resolution" value="1.60 A"/>
    <property type="chains" value="AAA/BBB=1-340"/>
</dbReference>
<dbReference type="PDB" id="6ZUJ">
    <property type="method" value="X-ray"/>
    <property type="resolution" value="1.80 A"/>
    <property type="chains" value="AAA/BBB/CCC/DDD=1-340"/>
</dbReference>
<dbReference type="PDB" id="7NBC">
    <property type="method" value="X-ray"/>
    <property type="resolution" value="1.71 A"/>
    <property type="chains" value="AAA/BBB/CCC/DDD=1-340"/>
</dbReference>
<dbReference type="PDB" id="7NBD">
    <property type="method" value="X-ray"/>
    <property type="resolution" value="1.86 A"/>
    <property type="chains" value="AAA/BBB/CCC/DDD=1-340"/>
</dbReference>
<dbReference type="PDB" id="7NBF">
    <property type="method" value="X-ray"/>
    <property type="resolution" value="1.60 A"/>
    <property type="chains" value="AAA/BBB/CCC/DDD=1-340"/>
</dbReference>
<dbReference type="PDB" id="7NBG">
    <property type="method" value="X-ray"/>
    <property type="resolution" value="1.53 A"/>
    <property type="chains" value="AAA/BBB/CCC/DDD=1-340"/>
</dbReference>
<dbReference type="PDB" id="7NBH">
    <property type="method" value="X-ray"/>
    <property type="resolution" value="1.77 A"/>
    <property type="chains" value="AAA/BBB/CCC/DDD=1-340"/>
</dbReference>
<dbReference type="PDBsum" id="3L6B"/>
<dbReference type="PDBsum" id="3L6R"/>
<dbReference type="PDBsum" id="5X2L"/>
<dbReference type="PDBsum" id="6SLH"/>
<dbReference type="PDBsum" id="6ZSP"/>
<dbReference type="PDBsum" id="6ZUJ"/>
<dbReference type="PDBsum" id="7NBC"/>
<dbReference type="PDBsum" id="7NBD"/>
<dbReference type="PDBsum" id="7NBF"/>
<dbReference type="PDBsum" id="7NBG"/>
<dbReference type="PDBsum" id="7NBH"/>
<dbReference type="SMR" id="Q9GZT4"/>
<dbReference type="BioGRID" id="121963">
    <property type="interactions" value="34"/>
</dbReference>
<dbReference type="FunCoup" id="Q9GZT4">
    <property type="interactions" value="399"/>
</dbReference>
<dbReference type="IntAct" id="Q9GZT4">
    <property type="interactions" value="11"/>
</dbReference>
<dbReference type="MINT" id="Q9GZT4"/>
<dbReference type="STRING" id="9606.ENSP00000339435"/>
<dbReference type="BindingDB" id="Q9GZT4"/>
<dbReference type="ChEMBL" id="CHEMBL4460"/>
<dbReference type="DrugBank" id="DB00114">
    <property type="generic name" value="Pyridoxal phosphate"/>
</dbReference>
<dbReference type="DrugBank" id="DB00133">
    <property type="generic name" value="Serine"/>
</dbReference>
<dbReference type="GlyGen" id="Q9GZT4">
    <property type="glycosylation" value="1 site"/>
</dbReference>
<dbReference type="iPTMnet" id="Q9GZT4"/>
<dbReference type="PhosphoSitePlus" id="Q9GZT4"/>
<dbReference type="BioMuta" id="SRR"/>
<dbReference type="DMDM" id="20139924"/>
<dbReference type="jPOST" id="Q9GZT4"/>
<dbReference type="MassIVE" id="Q9GZT4"/>
<dbReference type="PaxDb" id="9606-ENSP00000339435"/>
<dbReference type="PeptideAtlas" id="Q9GZT4"/>
<dbReference type="ProteomicsDB" id="80131"/>
<dbReference type="Pumba" id="Q9GZT4"/>
<dbReference type="Antibodypedia" id="4201">
    <property type="antibodies" value="338 antibodies from 28 providers"/>
</dbReference>
<dbReference type="DNASU" id="63826"/>
<dbReference type="Ensembl" id="ENST00000344595.10">
    <property type="protein sequence ID" value="ENSP00000339435.5"/>
    <property type="gene ID" value="ENSG00000167720.13"/>
</dbReference>
<dbReference type="GeneID" id="63826"/>
<dbReference type="KEGG" id="hsa:63826"/>
<dbReference type="MANE-Select" id="ENST00000344595.10">
    <property type="protein sequence ID" value="ENSP00000339435.5"/>
    <property type="RefSeq nucleotide sequence ID" value="NM_021947.3"/>
    <property type="RefSeq protein sequence ID" value="NP_068766.1"/>
</dbReference>
<dbReference type="UCSC" id="uc002fue.2">
    <property type="organism name" value="human"/>
</dbReference>
<dbReference type="AGR" id="HGNC:14398"/>
<dbReference type="CTD" id="63826"/>
<dbReference type="DisGeNET" id="63826"/>
<dbReference type="GeneCards" id="SRR"/>
<dbReference type="HGNC" id="HGNC:14398">
    <property type="gene designation" value="SRR"/>
</dbReference>
<dbReference type="HPA" id="ENSG00000167720">
    <property type="expression patterns" value="Low tissue specificity"/>
</dbReference>
<dbReference type="MIM" id="606477">
    <property type="type" value="gene"/>
</dbReference>
<dbReference type="neXtProt" id="NX_Q9GZT4"/>
<dbReference type="OpenTargets" id="ENSG00000167720"/>
<dbReference type="PharmGKB" id="PA37877"/>
<dbReference type="VEuPathDB" id="HostDB:ENSG00000167720"/>
<dbReference type="eggNOG" id="KOG1251">
    <property type="taxonomic scope" value="Eukaryota"/>
</dbReference>
<dbReference type="GeneTree" id="ENSGT00550000075026"/>
<dbReference type="HOGENOM" id="CLU_021152_4_2_1"/>
<dbReference type="InParanoid" id="Q9GZT4"/>
<dbReference type="OMA" id="LIHPFDH"/>
<dbReference type="OrthoDB" id="4418812at2759"/>
<dbReference type="PAN-GO" id="Q9GZT4">
    <property type="GO annotations" value="10 GO annotations based on evolutionary models"/>
</dbReference>
<dbReference type="PhylomeDB" id="Q9GZT4"/>
<dbReference type="TreeFam" id="TF313346"/>
<dbReference type="BioCyc" id="MetaCyc:HS09614-MONOMER"/>
<dbReference type="BRENDA" id="5.1.1.18">
    <property type="organism ID" value="2681"/>
</dbReference>
<dbReference type="PathwayCommons" id="Q9GZT4"/>
<dbReference type="Reactome" id="R-HSA-977347">
    <property type="pathway name" value="Serine biosynthesis"/>
</dbReference>
<dbReference type="SABIO-RK" id="Q9GZT4"/>
<dbReference type="SignaLink" id="Q9GZT4"/>
<dbReference type="SIGNOR" id="Q9GZT4"/>
<dbReference type="BioGRID-ORCS" id="63826">
    <property type="hits" value="9 hits in 1157 CRISPR screens"/>
</dbReference>
<dbReference type="ChiTaRS" id="SRR">
    <property type="organism name" value="human"/>
</dbReference>
<dbReference type="EvolutionaryTrace" id="Q9GZT4"/>
<dbReference type="GeneWiki" id="Serine_racemase"/>
<dbReference type="GenomeRNAi" id="63826"/>
<dbReference type="Pharos" id="Q9GZT4">
    <property type="development level" value="Tbio"/>
</dbReference>
<dbReference type="PRO" id="PR:Q9GZT4"/>
<dbReference type="Proteomes" id="UP000005640">
    <property type="component" value="Chromosome 17"/>
</dbReference>
<dbReference type="RNAct" id="Q9GZT4">
    <property type="molecule type" value="protein"/>
</dbReference>
<dbReference type="Bgee" id="ENSG00000167720">
    <property type="expression patterns" value="Expressed in ganglionic eminence and 170 other cell types or tissues"/>
</dbReference>
<dbReference type="ExpressionAtlas" id="Q9GZT4">
    <property type="expression patterns" value="baseline and differential"/>
</dbReference>
<dbReference type="GO" id="GO:0045177">
    <property type="term" value="C:apical part of cell"/>
    <property type="evidence" value="ECO:0007669"/>
    <property type="project" value="Ensembl"/>
</dbReference>
<dbReference type="GO" id="GO:0005737">
    <property type="term" value="C:cytoplasm"/>
    <property type="evidence" value="ECO:0000314"/>
    <property type="project" value="UniProtKB"/>
</dbReference>
<dbReference type="GO" id="GO:0005829">
    <property type="term" value="C:cytosol"/>
    <property type="evidence" value="ECO:0000304"/>
    <property type="project" value="Reactome"/>
</dbReference>
<dbReference type="GO" id="GO:0043025">
    <property type="term" value="C:neuronal cell body"/>
    <property type="evidence" value="ECO:0000314"/>
    <property type="project" value="UniProtKB"/>
</dbReference>
<dbReference type="GO" id="GO:0005524">
    <property type="term" value="F:ATP binding"/>
    <property type="evidence" value="ECO:0000314"/>
    <property type="project" value="UniProtKB"/>
</dbReference>
<dbReference type="GO" id="GO:0005509">
    <property type="term" value="F:calcium ion binding"/>
    <property type="evidence" value="ECO:0000250"/>
    <property type="project" value="UniProtKB"/>
</dbReference>
<dbReference type="GO" id="GO:0008721">
    <property type="term" value="F:D-serine ammonia-lyase activity"/>
    <property type="evidence" value="ECO:0007669"/>
    <property type="project" value="UniProtKB-EC"/>
</dbReference>
<dbReference type="GO" id="GO:0016594">
    <property type="term" value="F:glycine binding"/>
    <property type="evidence" value="ECO:0000250"/>
    <property type="project" value="UniProtKB"/>
</dbReference>
<dbReference type="GO" id="GO:0042802">
    <property type="term" value="F:identical protein binding"/>
    <property type="evidence" value="ECO:0000353"/>
    <property type="project" value="UniProtKB"/>
</dbReference>
<dbReference type="GO" id="GO:0003941">
    <property type="term" value="F:L-serine ammonia-lyase activity"/>
    <property type="evidence" value="ECO:0000314"/>
    <property type="project" value="UniProtKB"/>
</dbReference>
<dbReference type="GO" id="GO:0000287">
    <property type="term" value="F:magnesium ion binding"/>
    <property type="evidence" value="ECO:0000314"/>
    <property type="project" value="UniProtKB"/>
</dbReference>
<dbReference type="GO" id="GO:0030165">
    <property type="term" value="F:PDZ domain binding"/>
    <property type="evidence" value="ECO:0000353"/>
    <property type="project" value="UniProtKB"/>
</dbReference>
<dbReference type="GO" id="GO:0042803">
    <property type="term" value="F:protein homodimerization activity"/>
    <property type="evidence" value="ECO:0000353"/>
    <property type="project" value="UniProtKB"/>
</dbReference>
<dbReference type="GO" id="GO:0030170">
    <property type="term" value="F:pyridoxal phosphate binding"/>
    <property type="evidence" value="ECO:0000314"/>
    <property type="project" value="UniProtKB"/>
</dbReference>
<dbReference type="GO" id="GO:0030378">
    <property type="term" value="F:serine racemase activity"/>
    <property type="evidence" value="ECO:0000314"/>
    <property type="project" value="UniProtKB"/>
</dbReference>
<dbReference type="GO" id="GO:0018114">
    <property type="term" value="F:threonine racemase activity"/>
    <property type="evidence" value="ECO:0000250"/>
    <property type="project" value="UniProtKB"/>
</dbReference>
<dbReference type="GO" id="GO:0070179">
    <property type="term" value="P:D-serine biosynthetic process"/>
    <property type="evidence" value="ECO:0000314"/>
    <property type="project" value="UniProtKB"/>
</dbReference>
<dbReference type="GO" id="GO:0070178">
    <property type="term" value="P:D-serine metabolic process"/>
    <property type="evidence" value="ECO:0000314"/>
    <property type="project" value="UniProtKB"/>
</dbReference>
<dbReference type="GO" id="GO:0006563">
    <property type="term" value="P:L-serine metabolic process"/>
    <property type="evidence" value="ECO:0000314"/>
    <property type="project" value="UniProtKB"/>
</dbReference>
<dbReference type="GO" id="GO:0042866">
    <property type="term" value="P:pyruvate biosynthetic process"/>
    <property type="evidence" value="ECO:0000314"/>
    <property type="project" value="UniProtKB"/>
</dbReference>
<dbReference type="GO" id="GO:0032496">
    <property type="term" value="P:response to lipopolysaccharide"/>
    <property type="evidence" value="ECO:0000270"/>
    <property type="project" value="UniProtKB"/>
</dbReference>
<dbReference type="GO" id="GO:0009410">
    <property type="term" value="P:response to xenobiotic stimulus"/>
    <property type="evidence" value="ECO:0007669"/>
    <property type="project" value="Ensembl"/>
</dbReference>
<dbReference type="GO" id="GO:0009069">
    <property type="term" value="P:serine family amino acid metabolic process"/>
    <property type="evidence" value="ECO:0000250"/>
    <property type="project" value="UniProtKB"/>
</dbReference>
<dbReference type="CDD" id="cd01562">
    <property type="entry name" value="Thr-dehyd"/>
    <property type="match status" value="1"/>
</dbReference>
<dbReference type="FunFam" id="3.40.50.1100:FF:000041">
    <property type="entry name" value="Threonine ammonia-lyase, variant"/>
    <property type="match status" value="1"/>
</dbReference>
<dbReference type="Gene3D" id="3.40.50.1100">
    <property type="match status" value="2"/>
</dbReference>
<dbReference type="InterPro" id="IPR000634">
    <property type="entry name" value="Ser/Thr_deHydtase_PyrdxlP-BS"/>
</dbReference>
<dbReference type="InterPro" id="IPR001926">
    <property type="entry name" value="TrpB-like_PALP"/>
</dbReference>
<dbReference type="InterPro" id="IPR036052">
    <property type="entry name" value="TrpB-like_PALP_sf"/>
</dbReference>
<dbReference type="PANTHER" id="PTHR43050">
    <property type="entry name" value="SERINE / THREONINE RACEMASE FAMILY MEMBER"/>
    <property type="match status" value="1"/>
</dbReference>
<dbReference type="PANTHER" id="PTHR43050:SF1">
    <property type="entry name" value="SERINE RACEMASE"/>
    <property type="match status" value="1"/>
</dbReference>
<dbReference type="Pfam" id="PF00291">
    <property type="entry name" value="PALP"/>
    <property type="match status" value="1"/>
</dbReference>
<dbReference type="SUPFAM" id="SSF53686">
    <property type="entry name" value="Tryptophan synthase beta subunit-like PLP-dependent enzymes"/>
    <property type="match status" value="1"/>
</dbReference>
<dbReference type="PROSITE" id="PS00165">
    <property type="entry name" value="DEHYDRATASE_SER_THR"/>
    <property type="match status" value="1"/>
</dbReference>
<gene>
    <name type="primary">SRR</name>
</gene>
<reference key="1">
    <citation type="journal article" date="2000" name="Gene">
        <title>Human serine racemase: molecular cloning, genomic organization and functional expression.</title>
        <authorList>
            <person name="De Miranda J."/>
            <person name="Santoro A."/>
            <person name="Engelender S."/>
            <person name="Wolosker H."/>
        </authorList>
    </citation>
    <scope>NUCLEOTIDE SEQUENCE [MRNA]</scope>
    <scope>FUNCTION</scope>
    <source>
        <tissue>Brain</tissue>
    </source>
</reference>
<reference key="2">
    <citation type="journal article" date="2004" name="Brain Res. Mol. Brain Res.">
        <title>Characterization and localization of a human serine racemase.</title>
        <authorList>
            <person name="Xia M."/>
            <person name="Liu Y."/>
            <person name="Figueroa D.J."/>
            <person name="Chiu C.S."/>
            <person name="Wei N."/>
            <person name="Lawlor A.M."/>
            <person name="Lu P."/>
            <person name="Sur C."/>
            <person name="Koblan K.S."/>
            <person name="Connolly T.M."/>
        </authorList>
    </citation>
    <scope>NUCLEOTIDE SEQUENCE [MRNA]</scope>
    <scope>TISSUE SPECIFICITY</scope>
</reference>
<reference key="3">
    <citation type="journal article" date="2004" name="Nat. Genet.">
        <title>Complete sequencing and characterization of 21,243 full-length human cDNAs.</title>
        <authorList>
            <person name="Ota T."/>
            <person name="Suzuki Y."/>
            <person name="Nishikawa T."/>
            <person name="Otsuki T."/>
            <person name="Sugiyama T."/>
            <person name="Irie R."/>
            <person name="Wakamatsu A."/>
            <person name="Hayashi K."/>
            <person name="Sato H."/>
            <person name="Nagai K."/>
            <person name="Kimura K."/>
            <person name="Makita H."/>
            <person name="Sekine M."/>
            <person name="Obayashi M."/>
            <person name="Nishi T."/>
            <person name="Shibahara T."/>
            <person name="Tanaka T."/>
            <person name="Ishii S."/>
            <person name="Yamamoto J."/>
            <person name="Saito K."/>
            <person name="Kawai Y."/>
            <person name="Isono Y."/>
            <person name="Nakamura Y."/>
            <person name="Nagahari K."/>
            <person name="Murakami K."/>
            <person name="Yasuda T."/>
            <person name="Iwayanagi T."/>
            <person name="Wagatsuma M."/>
            <person name="Shiratori A."/>
            <person name="Sudo H."/>
            <person name="Hosoiri T."/>
            <person name="Kaku Y."/>
            <person name="Kodaira H."/>
            <person name="Kondo H."/>
            <person name="Sugawara M."/>
            <person name="Takahashi M."/>
            <person name="Kanda K."/>
            <person name="Yokoi T."/>
            <person name="Furuya T."/>
            <person name="Kikkawa E."/>
            <person name="Omura Y."/>
            <person name="Abe K."/>
            <person name="Kamihara K."/>
            <person name="Katsuta N."/>
            <person name="Sato K."/>
            <person name="Tanikawa M."/>
            <person name="Yamazaki M."/>
            <person name="Ninomiya K."/>
            <person name="Ishibashi T."/>
            <person name="Yamashita H."/>
            <person name="Murakawa K."/>
            <person name="Fujimori K."/>
            <person name="Tanai H."/>
            <person name="Kimata M."/>
            <person name="Watanabe M."/>
            <person name="Hiraoka S."/>
            <person name="Chiba Y."/>
            <person name="Ishida S."/>
            <person name="Ono Y."/>
            <person name="Takiguchi S."/>
            <person name="Watanabe S."/>
            <person name="Yosida M."/>
            <person name="Hotuta T."/>
            <person name="Kusano J."/>
            <person name="Kanehori K."/>
            <person name="Takahashi-Fujii A."/>
            <person name="Hara H."/>
            <person name="Tanase T.-O."/>
            <person name="Nomura Y."/>
            <person name="Togiya S."/>
            <person name="Komai F."/>
            <person name="Hara R."/>
            <person name="Takeuchi K."/>
            <person name="Arita M."/>
            <person name="Imose N."/>
            <person name="Musashino K."/>
            <person name="Yuuki H."/>
            <person name="Oshima A."/>
            <person name="Sasaki N."/>
            <person name="Aotsuka S."/>
            <person name="Yoshikawa Y."/>
            <person name="Matsunawa H."/>
            <person name="Ichihara T."/>
            <person name="Shiohata N."/>
            <person name="Sano S."/>
            <person name="Moriya S."/>
            <person name="Momiyama H."/>
            <person name="Satoh N."/>
            <person name="Takami S."/>
            <person name="Terashima Y."/>
            <person name="Suzuki O."/>
            <person name="Nakagawa S."/>
            <person name="Senoh A."/>
            <person name="Mizoguchi H."/>
            <person name="Goto Y."/>
            <person name="Shimizu F."/>
            <person name="Wakebe H."/>
            <person name="Hishigaki H."/>
            <person name="Watanabe T."/>
            <person name="Sugiyama A."/>
            <person name="Takemoto M."/>
            <person name="Kawakami B."/>
            <person name="Yamazaki M."/>
            <person name="Watanabe K."/>
            <person name="Kumagai A."/>
            <person name="Itakura S."/>
            <person name="Fukuzumi Y."/>
            <person name="Fujimori Y."/>
            <person name="Komiyama M."/>
            <person name="Tashiro H."/>
            <person name="Tanigami A."/>
            <person name="Fujiwara T."/>
            <person name="Ono T."/>
            <person name="Yamada K."/>
            <person name="Fujii Y."/>
            <person name="Ozaki K."/>
            <person name="Hirao M."/>
            <person name="Ohmori Y."/>
            <person name="Kawabata A."/>
            <person name="Hikiji T."/>
            <person name="Kobatake N."/>
            <person name="Inagaki H."/>
            <person name="Ikema Y."/>
            <person name="Okamoto S."/>
            <person name="Okitani R."/>
            <person name="Kawakami T."/>
            <person name="Noguchi S."/>
            <person name="Itoh T."/>
            <person name="Shigeta K."/>
            <person name="Senba T."/>
            <person name="Matsumura K."/>
            <person name="Nakajima Y."/>
            <person name="Mizuno T."/>
            <person name="Morinaga M."/>
            <person name="Sasaki M."/>
            <person name="Togashi T."/>
            <person name="Oyama M."/>
            <person name="Hata H."/>
            <person name="Watanabe M."/>
            <person name="Komatsu T."/>
            <person name="Mizushima-Sugano J."/>
            <person name="Satoh T."/>
            <person name="Shirai Y."/>
            <person name="Takahashi Y."/>
            <person name="Nakagawa K."/>
            <person name="Okumura K."/>
            <person name="Nagase T."/>
            <person name="Nomura N."/>
            <person name="Kikuchi H."/>
            <person name="Masuho Y."/>
            <person name="Yamashita R."/>
            <person name="Nakai K."/>
            <person name="Yada T."/>
            <person name="Nakamura Y."/>
            <person name="Ohara O."/>
            <person name="Isogai T."/>
            <person name="Sugano S."/>
        </authorList>
    </citation>
    <scope>NUCLEOTIDE SEQUENCE [LARGE SCALE MRNA]</scope>
</reference>
<reference key="4">
    <citation type="submission" date="2004-06" db="EMBL/GenBank/DDBJ databases">
        <title>Cloning of human full open reading frames in Gateway(TM) system entry vector (pDONR201).</title>
        <authorList>
            <person name="Ebert L."/>
            <person name="Schick M."/>
            <person name="Neubert P."/>
            <person name="Schatten R."/>
            <person name="Henze S."/>
            <person name="Korn B."/>
        </authorList>
    </citation>
    <scope>NUCLEOTIDE SEQUENCE [LARGE SCALE MRNA]</scope>
</reference>
<reference key="5">
    <citation type="submission" date="2005-09" db="EMBL/GenBank/DDBJ databases">
        <authorList>
            <person name="Mural R.J."/>
            <person name="Istrail S."/>
            <person name="Sutton G.G."/>
            <person name="Florea L."/>
            <person name="Halpern A.L."/>
            <person name="Mobarry C.M."/>
            <person name="Lippert R."/>
            <person name="Walenz B."/>
            <person name="Shatkay H."/>
            <person name="Dew I."/>
            <person name="Miller J.R."/>
            <person name="Flanigan M.J."/>
            <person name="Edwards N.J."/>
            <person name="Bolanos R."/>
            <person name="Fasulo D."/>
            <person name="Halldorsson B.V."/>
            <person name="Hannenhalli S."/>
            <person name="Turner R."/>
            <person name="Yooseph S."/>
            <person name="Lu F."/>
            <person name="Nusskern D.R."/>
            <person name="Shue B.C."/>
            <person name="Zheng X.H."/>
            <person name="Zhong F."/>
            <person name="Delcher A.L."/>
            <person name="Huson D.H."/>
            <person name="Kravitz S.A."/>
            <person name="Mouchard L."/>
            <person name="Reinert K."/>
            <person name="Remington K.A."/>
            <person name="Clark A.G."/>
            <person name="Waterman M.S."/>
            <person name="Eichler E.E."/>
            <person name="Adams M.D."/>
            <person name="Hunkapiller M.W."/>
            <person name="Myers E.W."/>
            <person name="Venter J.C."/>
        </authorList>
    </citation>
    <scope>NUCLEOTIDE SEQUENCE [LARGE SCALE GENOMIC DNA]</scope>
</reference>
<reference key="6">
    <citation type="journal article" date="2004" name="Genome Res.">
        <title>The status, quality, and expansion of the NIH full-length cDNA project: the Mammalian Gene Collection (MGC).</title>
        <authorList>
            <consortium name="The MGC Project Team"/>
        </authorList>
    </citation>
    <scope>NUCLEOTIDE SEQUENCE [LARGE SCALE MRNA]</scope>
    <source>
        <tissue>Brain</tissue>
    </source>
</reference>
<reference key="7">
    <citation type="submission" date="2008-12" db="UniProtKB">
        <authorList>
            <person name="Lubec G."/>
            <person name="Chen W.-Q."/>
            <person name="Sun Y."/>
        </authorList>
    </citation>
    <scope>PROTEIN SEQUENCE OF 97-114; 116-135; 206-221 AND 226-241</scope>
    <scope>IDENTIFICATION BY MASS SPECTROMETRY</scope>
    <source>
        <tissue>Fetal brain cortex</tissue>
    </source>
</reference>
<reference key="8">
    <citation type="journal article" date="2007" name="Eur. J. Neurosci.">
        <title>d-Amino acid oxidase and serine racemase in human brain: normal distribution and altered expression in schizophrenia.</title>
        <authorList>
            <person name="Verrall L."/>
            <person name="Walker M."/>
            <person name="Rawlings N."/>
            <person name="Benzel I."/>
            <person name="Kew J.N."/>
            <person name="Harrison P.J."/>
            <person name="Burnet P.W."/>
        </authorList>
    </citation>
    <scope>TISSUE SPECIFICITY</scope>
</reference>
<reference key="9">
    <citation type="journal article" date="2013" name="J. Med. Chem.">
        <title>Identification of novel D-amino acid oxidase inhibitors by in silico screening and their functional characterization in vitro.</title>
        <authorList>
            <person name="Katane M."/>
            <person name="Osaka N."/>
            <person name="Matsuda S."/>
            <person name="Maeda K."/>
            <person name="Kawata T."/>
            <person name="Saitoh Y."/>
            <person name="Sekine M."/>
            <person name="Furuchi T."/>
            <person name="Doi I."/>
            <person name="Hirono S."/>
            <person name="Homma H."/>
        </authorList>
    </citation>
    <scope>FUNCTION</scope>
    <scope>CATALYTIC ACTIVITY</scope>
    <scope>ACTIVITY REGULATION</scope>
</reference>
<reference key="10">
    <citation type="journal article" date="2014" name="Neurobiol. Aging">
        <title>Pathogenic effects of amyotrophic lateral sclerosis-linked mutation in D-amino acid oxidase are mediated by D-serine.</title>
        <authorList>
            <person name="Paul P."/>
            <person name="Murphy T."/>
            <person name="Oseni Z."/>
            <person name="Sivalokanathan S."/>
            <person name="de Belleroche J.S."/>
        </authorList>
    </citation>
    <scope>TISSUE SPECIFICITY</scope>
</reference>
<reference evidence="14 15" key="11">
    <citation type="journal article" date="2010" name="J. Biol. Chem.">
        <title>The structure of mammalian serine racemase: evidence for conformational changes upon inhibitor binding.</title>
        <authorList>
            <person name="Smith M.A."/>
            <person name="Mack V."/>
            <person name="Ebneth A."/>
            <person name="Moraes I."/>
            <person name="Felicetti B."/>
            <person name="Wood M."/>
            <person name="Schonfeld D."/>
            <person name="Mather O."/>
            <person name="Cesura A."/>
            <person name="Barker J."/>
        </authorList>
    </citation>
    <scope>X-RAY CRYSTALLOGRAPHY (1.5 ANGSTROMS) OF 3-340 IN COMPLEX WITH MANGANESE IONS; MALONATE AND PYRIDOXAL PHOSPHATE</scope>
    <scope>COFACTOR</scope>
    <scope>FUNCTION</scope>
    <scope>CATALYTIC ACTIVITY</scope>
    <scope>ACTIVITY REGULATION</scope>
    <scope>BIOPHYSICOCHEMICAL PROPERTIES</scope>
    <scope>SUBUNIT</scope>
    <scope>REACTION MECHANISM</scope>
    <scope>PYRIDOXAL PHOSPHATE AT LYS-56</scope>
</reference>
<reference evidence="16" key="12">
    <citation type="journal article" date="2018" name="Bioorg. Med. Chem.">
        <title>Design, synthesis, and evaluation of novel inhibitors for wild-type human serine racemase.</title>
        <authorList>
            <person name="Takahara S."/>
            <person name="Nakagawa K."/>
            <person name="Uchiyama T."/>
            <person name="Yoshida T."/>
            <person name="Matsumoto K."/>
            <person name="Kawasumi Y."/>
            <person name="Mizuguchi M."/>
            <person name="Obita T."/>
            <person name="Watanabe Y."/>
            <person name="Hayakawa D."/>
            <person name="Gouda H."/>
            <person name="Mori H."/>
            <person name="Toyooka N."/>
        </authorList>
    </citation>
    <scope>X-RAY CRYSTALLOGRAPHY (1.81 ANGSTROMS) IN COMPLEX WITH MG(2+) AND PYRIDOXAL 5'-PHOSPHATE</scope>
    <scope>FUNCTION</scope>
    <scope>CATALYTIC ACTIVITY</scope>
    <scope>COFACTOR</scope>
    <scope>BIOPHYSICOCHEMICAL PROPERTIES</scope>
    <scope>SUBUNIT</scope>
    <scope>PYRIDOXAL PHOSPHATE AT LYS-56</scope>
</reference>
<reference evidence="17" key="13">
    <citation type="journal article" date="2020" name="Acta Crystallogr.">
        <title>Conformational flexibility within the small domain of human serine racemase.</title>
        <authorList>
            <person name="Koulouris C.R."/>
            <person name="Bax B.D."/>
            <person name="Atack J.R."/>
            <person name="Roe S.M."/>
        </authorList>
    </citation>
    <scope>X-RAY CRYSTALLOGRAPHY (1.89 ANGSTROMS) IN COMPLEX WITH MG(2+)</scope>
    <scope>COFACTOR</scope>
    <scope>SUBUNIT</scope>
</reference>
<reference evidence="18 19 20 21 22 23 24" key="14">
    <citation type="journal article" date="2022" name="Commun. Biol.">
        <title>Tyrosine 121 moves revealing a ligandable pocket that couples catalysis to ATP-binding in serine racemase.</title>
        <authorList>
            <person name="Koulouris C.R."/>
            <person name="Gardiner S.E."/>
            <person name="Harris T.K."/>
            <person name="Elvers K.T."/>
            <person name="Mark Roe S."/>
            <person name="Gillespie J.A."/>
            <person name="Ward S.E."/>
            <person name="Grubisha O."/>
            <person name="Nicholls R.A."/>
            <person name="Atack J.R."/>
            <person name="Bax B.D."/>
        </authorList>
    </citation>
    <scope>X-RAY CRYSTALLOGRAPHY (1.53 ANGSTROMS) IN COMPLEX WITH ATP; CA(2+); MG(2+) AND PYRIDOXAL 5'-PHOSPHATE</scope>
    <scope>COFACTOR</scope>
    <scope>SUBUNIT</scope>
    <scope>PYRIDOXAL PHOSPHATE AT LYS-56</scope>
</reference>
<comment type="function">
    <text evidence="3 6 7 9">Catalyzes the synthesis of D-serine from L-serine (PubMed:20106978, PubMed:23391306, PubMed:29277459). D-serine is a key coagonist with glutamate at NMDA receptors. Has dehydratase activity towards both L-serine and D-serine (By similarity).</text>
</comment>
<comment type="catalytic activity">
    <reaction evidence="6 7 9">
        <text>L-serine = D-serine</text>
        <dbReference type="Rhea" id="RHEA:10980"/>
        <dbReference type="ChEBI" id="CHEBI:33384"/>
        <dbReference type="ChEBI" id="CHEBI:35247"/>
        <dbReference type="EC" id="5.1.1.18"/>
    </reaction>
</comment>
<comment type="catalytic activity">
    <reaction evidence="3">
        <text>D-serine = pyruvate + NH4(+)</text>
        <dbReference type="Rhea" id="RHEA:13977"/>
        <dbReference type="ChEBI" id="CHEBI:15361"/>
        <dbReference type="ChEBI" id="CHEBI:28938"/>
        <dbReference type="ChEBI" id="CHEBI:35247"/>
        <dbReference type="EC" id="4.3.1.18"/>
    </reaction>
</comment>
<comment type="catalytic activity">
    <reaction evidence="3">
        <text>L-serine = pyruvate + NH4(+)</text>
        <dbReference type="Rhea" id="RHEA:19169"/>
        <dbReference type="ChEBI" id="CHEBI:15361"/>
        <dbReference type="ChEBI" id="CHEBI:28938"/>
        <dbReference type="ChEBI" id="CHEBI:33384"/>
        <dbReference type="EC" id="4.3.1.17"/>
    </reaction>
</comment>
<comment type="cofactor">
    <cofactor evidence="9 10 11">
        <name>Mg(2+)</name>
        <dbReference type="ChEBI" id="CHEBI:18420"/>
    </cofactor>
    <cofactor evidence="6">
        <name>Mn(2+)</name>
        <dbReference type="ChEBI" id="CHEBI:29035"/>
    </cofactor>
    <cofactor evidence="11">
        <name>Ca(2+)</name>
        <dbReference type="ChEBI" id="CHEBI:29108"/>
    </cofactor>
</comment>
<comment type="cofactor">
    <cofactor evidence="6 9 11">
        <name>pyridoxal 5'-phosphate</name>
        <dbReference type="ChEBI" id="CHEBI:597326"/>
    </cofactor>
</comment>
<comment type="activity regulation">
    <text evidence="6 7">Allosterically activated by magnesium, and possibly also other divalent metal cations. Allosterically activated by ATP, ADP or GTP. Competitively inhibited by malonate (PubMed:20106978). Inhibited by meso-tartrate and malonate (PubMed:23391306).</text>
</comment>
<comment type="biophysicochemical properties">
    <kinetics>
        <KM evidence="9">6.6 mM for L-serine (at 37 degrees Celsius and at pH 8)</KM>
        <KM evidence="6">6.5 mM for L-serine</KM>
    </kinetics>
</comment>
<comment type="subunit">
    <text evidence="6 9 10 11">Homodimer.</text>
</comment>
<comment type="interaction">
    <interactant intactId="EBI-9055653">
        <id>Q9GZT4</id>
    </interactant>
    <interactant intactId="EBI-2130266">
        <id>Q9H4P4</id>
        <label>RNF41</label>
    </interactant>
    <organismsDiffer>false</organismsDiffer>
    <experiments>7</experiments>
</comment>
<comment type="interaction">
    <interactant intactId="EBI-9055653">
        <id>Q9GZT4</id>
    </interactant>
    <interactant intactId="EBI-9055653">
        <id>Q9GZT4</id>
        <label>SRR</label>
    </interactant>
    <organismsDiffer>false</organismsDiffer>
    <experiments>5</experiments>
</comment>
<comment type="tissue specificity">
    <text evidence="4 5 8">Expressed in the cerebellum, hippocampus, dorsolateral prefrontal cortex, and in motor neurons and glial cells of the lumbar spinal cord (at protein level) (PubMed:17880399, PubMed:24138986). Increased in the dorsolateral prefrontal cortex of schizophrenic patients (at protein level) (PubMed:17880399). Brain: expressed at high levels in hippocampus and corpus callosum, intermediate levels in substantia nigra and caudate, and low levels in amygdala, thalamus, and subthalamic nuclei (PubMed:15193426). Expressed in heart, skeletal muscle, kidney, and liver (PubMed:15193426).</text>
</comment>
<comment type="PTM">
    <text evidence="3">S-nitrosylated, leading to decrease the enzyme activity.</text>
</comment>
<comment type="similarity">
    <text evidence="13">Belongs to the serine/threonine dehydratase family.</text>
</comment>
<name>SRR_HUMAN</name>
<keyword id="KW-0002">3D-structure</keyword>
<keyword id="KW-0021">Allosteric enzyme</keyword>
<keyword id="KW-0067">ATP-binding</keyword>
<keyword id="KW-0903">Direct protein sequencing</keyword>
<keyword id="KW-0413">Isomerase</keyword>
<keyword id="KW-0456">Lyase</keyword>
<keyword id="KW-0460">Magnesium</keyword>
<keyword id="KW-0479">Metal-binding</keyword>
<keyword id="KW-0547">Nucleotide-binding</keyword>
<keyword id="KW-1267">Proteomics identification</keyword>
<keyword id="KW-0663">Pyridoxal phosphate</keyword>
<keyword id="KW-1185">Reference proteome</keyword>
<keyword id="KW-0702">S-nitrosylation</keyword>
<sequence>MCAQYCISFADVEKAHINIRDSIHLTPVLTSSILNQLTGRNLFFKCELFQKTGSFKIRGALNAVRSLVPDALERKPKAVVTHSSGNHGQALTYAAKLEGIPAYIVVPQTAPDCKKLAIQAYGASIVYCEPSDESRENVAKRVTEETEGIMVHPNQEPAVIAGQGTIALEVLNQVPLVDALVVPVGGGGMLAGIAITVKALKPSVKVYAAEPSNADDCYQSKLKGKLMPNLYPPETIADGVKSSIGLNTWPIIRDLVDDIFTVTEDEIKCATQLVWERMKLLIEPTAGVGVAAVLSQHFQTVSPEVKNICIVLSGGNVDLTSSITWVKQAERPASYQSVSV</sequence>
<evidence type="ECO:0000250" key="1">
    <source>
        <dbReference type="UniProtKB" id="O59791"/>
    </source>
</evidence>
<evidence type="ECO:0000250" key="2">
    <source>
        <dbReference type="UniProtKB" id="Q76EQ0"/>
    </source>
</evidence>
<evidence type="ECO:0000250" key="3">
    <source>
        <dbReference type="UniProtKB" id="Q9QZX7"/>
    </source>
</evidence>
<evidence type="ECO:0000269" key="4">
    <source>
    </source>
</evidence>
<evidence type="ECO:0000269" key="5">
    <source>
    </source>
</evidence>
<evidence type="ECO:0000269" key="6">
    <source>
    </source>
</evidence>
<evidence type="ECO:0000269" key="7">
    <source>
    </source>
</evidence>
<evidence type="ECO:0000269" key="8">
    <source>
    </source>
</evidence>
<evidence type="ECO:0000269" key="9">
    <source>
    </source>
</evidence>
<evidence type="ECO:0000269" key="10">
    <source>
    </source>
</evidence>
<evidence type="ECO:0000269" key="11">
    <source>
    </source>
</evidence>
<evidence type="ECO:0000303" key="12">
    <source>
    </source>
</evidence>
<evidence type="ECO:0000305" key="13"/>
<evidence type="ECO:0007744" key="14">
    <source>
        <dbReference type="PDB" id="3L6B"/>
    </source>
</evidence>
<evidence type="ECO:0007744" key="15">
    <source>
        <dbReference type="PDB" id="3L6R"/>
    </source>
</evidence>
<evidence type="ECO:0007744" key="16">
    <source>
        <dbReference type="PDB" id="5X2L"/>
    </source>
</evidence>
<evidence type="ECO:0007744" key="17">
    <source>
        <dbReference type="PDB" id="6SLH"/>
    </source>
</evidence>
<evidence type="ECO:0007744" key="18">
    <source>
        <dbReference type="PDB" id="6ZSP"/>
    </source>
</evidence>
<evidence type="ECO:0007744" key="19">
    <source>
        <dbReference type="PDB" id="6ZUJ"/>
    </source>
</evidence>
<evidence type="ECO:0007744" key="20">
    <source>
        <dbReference type="PDB" id="7NBC"/>
    </source>
</evidence>
<evidence type="ECO:0007744" key="21">
    <source>
        <dbReference type="PDB" id="7NBD"/>
    </source>
</evidence>
<evidence type="ECO:0007744" key="22">
    <source>
        <dbReference type="PDB" id="7NBF"/>
    </source>
</evidence>
<evidence type="ECO:0007744" key="23">
    <source>
        <dbReference type="PDB" id="7NBG"/>
    </source>
</evidence>
<evidence type="ECO:0007744" key="24">
    <source>
        <dbReference type="PDB" id="7NBH"/>
    </source>
</evidence>
<evidence type="ECO:0007829" key="25">
    <source>
        <dbReference type="PDB" id="3L6B"/>
    </source>
</evidence>